<accession>B3DQF7</accession>
<proteinExistence type="inferred from homology"/>
<keyword id="KW-0413">Isomerase</keyword>
<gene>
    <name evidence="1" type="primary">rpiA</name>
    <name type="ordered locus">BLD_1750</name>
</gene>
<sequence length="232" mass="25297">MDKAQQDALKKAAGIEAAKLVENGMIAGLGTGSTVKFLVDELGRRHQEEGLEFTGVTTSRRTQVQAESYGIKIVDIDDVDHIDVTIDGADEVDKNFNGIKGGGAALLWEKIVATNSNQIVWIVDESKVVDTIGKFPLPVEVIPFGAGQVIKKFEARGYKPVLRLDADGKEVRTDENNFVVDLHLERIDHPQELAEDLINTVGVVEHGLFLNMVDKVIVGDPNGPRVMTNANK</sequence>
<feature type="chain" id="PRO_1000097647" description="Ribose-5-phosphate isomerase A">
    <location>
        <begin position="1"/>
        <end position="232"/>
    </location>
</feature>
<feature type="active site" description="Proton acceptor" evidence="1">
    <location>
        <position position="109"/>
    </location>
</feature>
<feature type="binding site" evidence="1">
    <location>
        <begin position="31"/>
        <end position="34"/>
    </location>
    <ligand>
        <name>substrate</name>
    </ligand>
</feature>
<feature type="binding site" evidence="1">
    <location>
        <begin position="87"/>
        <end position="90"/>
    </location>
    <ligand>
        <name>substrate</name>
    </ligand>
</feature>
<feature type="binding site" evidence="1">
    <location>
        <begin position="100"/>
        <end position="103"/>
    </location>
    <ligand>
        <name>substrate</name>
    </ligand>
</feature>
<feature type="binding site" evidence="1">
    <location>
        <position position="127"/>
    </location>
    <ligand>
        <name>substrate</name>
    </ligand>
</feature>
<protein>
    <recommendedName>
        <fullName evidence="1">Ribose-5-phosphate isomerase A</fullName>
        <ecNumber evidence="1">5.3.1.6</ecNumber>
    </recommendedName>
    <alternativeName>
        <fullName evidence="1">Phosphoriboisomerase A</fullName>
        <shortName evidence="1">PRI</shortName>
    </alternativeName>
</protein>
<organism>
    <name type="scientific">Bifidobacterium longum (strain DJO10A)</name>
    <dbReference type="NCBI Taxonomy" id="205913"/>
    <lineage>
        <taxon>Bacteria</taxon>
        <taxon>Bacillati</taxon>
        <taxon>Actinomycetota</taxon>
        <taxon>Actinomycetes</taxon>
        <taxon>Bifidobacteriales</taxon>
        <taxon>Bifidobacteriaceae</taxon>
        <taxon>Bifidobacterium</taxon>
    </lineage>
</organism>
<comment type="function">
    <text evidence="1">Catalyzes the reversible conversion of ribose-5-phosphate to ribulose 5-phosphate.</text>
</comment>
<comment type="catalytic activity">
    <reaction evidence="1">
        <text>aldehydo-D-ribose 5-phosphate = D-ribulose 5-phosphate</text>
        <dbReference type="Rhea" id="RHEA:14657"/>
        <dbReference type="ChEBI" id="CHEBI:58121"/>
        <dbReference type="ChEBI" id="CHEBI:58273"/>
        <dbReference type="EC" id="5.3.1.6"/>
    </reaction>
</comment>
<comment type="pathway">
    <text evidence="1">Carbohydrate degradation; pentose phosphate pathway; D-ribose 5-phosphate from D-ribulose 5-phosphate (non-oxidative stage): step 1/1.</text>
</comment>
<comment type="subunit">
    <text evidence="1">Homodimer.</text>
</comment>
<comment type="similarity">
    <text evidence="1">Belongs to the ribose 5-phosphate isomerase family.</text>
</comment>
<name>RPIA_BIFLD</name>
<evidence type="ECO:0000255" key="1">
    <source>
        <dbReference type="HAMAP-Rule" id="MF_00170"/>
    </source>
</evidence>
<reference key="1">
    <citation type="journal article" date="2008" name="BMC Genomics">
        <title>Comparative genomic analysis of the gut bacterium Bifidobacterium longum reveals loci susceptible to deletion during pure culture growth.</title>
        <authorList>
            <person name="Lee J.H."/>
            <person name="Karamychev V.N."/>
            <person name="Kozyavkin S.A."/>
            <person name="Mills D."/>
            <person name="Pavlov A.R."/>
            <person name="Pavlova N.V."/>
            <person name="Polouchine N.N."/>
            <person name="Richardson P.M."/>
            <person name="Shakhova V.V."/>
            <person name="Slesarev A.I."/>
            <person name="Weimer B."/>
            <person name="O'Sullivan D.J."/>
        </authorList>
    </citation>
    <scope>NUCLEOTIDE SEQUENCE [LARGE SCALE GENOMIC DNA]</scope>
    <source>
        <strain>DJO10A</strain>
    </source>
</reference>
<dbReference type="EC" id="5.3.1.6" evidence="1"/>
<dbReference type="EMBL" id="CP000605">
    <property type="protein sequence ID" value="ACD99195.1"/>
    <property type="molecule type" value="Genomic_DNA"/>
</dbReference>
<dbReference type="RefSeq" id="WP_007056729.1">
    <property type="nucleotide sequence ID" value="NZ_AABM02000016.1"/>
</dbReference>
<dbReference type="SMR" id="B3DQF7"/>
<dbReference type="KEGG" id="blj:BLD_1750"/>
<dbReference type="HOGENOM" id="CLU_056590_1_0_11"/>
<dbReference type="UniPathway" id="UPA00115">
    <property type="reaction ID" value="UER00412"/>
</dbReference>
<dbReference type="Proteomes" id="UP000002419">
    <property type="component" value="Chromosome"/>
</dbReference>
<dbReference type="GO" id="GO:0005829">
    <property type="term" value="C:cytosol"/>
    <property type="evidence" value="ECO:0007669"/>
    <property type="project" value="TreeGrafter"/>
</dbReference>
<dbReference type="GO" id="GO:0004751">
    <property type="term" value="F:ribose-5-phosphate isomerase activity"/>
    <property type="evidence" value="ECO:0007669"/>
    <property type="project" value="UniProtKB-UniRule"/>
</dbReference>
<dbReference type="GO" id="GO:0006014">
    <property type="term" value="P:D-ribose metabolic process"/>
    <property type="evidence" value="ECO:0007669"/>
    <property type="project" value="TreeGrafter"/>
</dbReference>
<dbReference type="GO" id="GO:0009052">
    <property type="term" value="P:pentose-phosphate shunt, non-oxidative branch"/>
    <property type="evidence" value="ECO:0007669"/>
    <property type="project" value="UniProtKB-UniRule"/>
</dbReference>
<dbReference type="CDD" id="cd01398">
    <property type="entry name" value="RPI_A"/>
    <property type="match status" value="1"/>
</dbReference>
<dbReference type="FunFam" id="3.40.50.1360:FF:000001">
    <property type="entry name" value="Ribose-5-phosphate isomerase A"/>
    <property type="match status" value="1"/>
</dbReference>
<dbReference type="Gene3D" id="3.30.70.260">
    <property type="match status" value="1"/>
</dbReference>
<dbReference type="Gene3D" id="3.40.50.1360">
    <property type="match status" value="1"/>
</dbReference>
<dbReference type="HAMAP" id="MF_00170">
    <property type="entry name" value="Rib_5P_isom_A"/>
    <property type="match status" value="1"/>
</dbReference>
<dbReference type="InterPro" id="IPR037171">
    <property type="entry name" value="NagB/RpiA_transferase-like"/>
</dbReference>
<dbReference type="InterPro" id="IPR020672">
    <property type="entry name" value="Ribose5P_isomerase_typA_subgr"/>
</dbReference>
<dbReference type="InterPro" id="IPR004788">
    <property type="entry name" value="Ribose5P_isomerase_type_A"/>
</dbReference>
<dbReference type="NCBIfam" id="NF001924">
    <property type="entry name" value="PRK00702.1"/>
    <property type="match status" value="1"/>
</dbReference>
<dbReference type="NCBIfam" id="TIGR00021">
    <property type="entry name" value="rpiA"/>
    <property type="match status" value="1"/>
</dbReference>
<dbReference type="PANTHER" id="PTHR11934">
    <property type="entry name" value="RIBOSE-5-PHOSPHATE ISOMERASE"/>
    <property type="match status" value="1"/>
</dbReference>
<dbReference type="PANTHER" id="PTHR11934:SF0">
    <property type="entry name" value="RIBOSE-5-PHOSPHATE ISOMERASE"/>
    <property type="match status" value="1"/>
</dbReference>
<dbReference type="Pfam" id="PF06026">
    <property type="entry name" value="Rib_5-P_isom_A"/>
    <property type="match status" value="1"/>
</dbReference>
<dbReference type="SUPFAM" id="SSF75445">
    <property type="entry name" value="D-ribose-5-phosphate isomerase (RpiA), lid domain"/>
    <property type="match status" value="1"/>
</dbReference>
<dbReference type="SUPFAM" id="SSF100950">
    <property type="entry name" value="NagB/RpiA/CoA transferase-like"/>
    <property type="match status" value="1"/>
</dbReference>